<feature type="chain" id="PRO_0000255563" description="Cytochrome b">
    <location>
        <begin position="1"/>
        <end position="381"/>
    </location>
</feature>
<feature type="transmembrane region" description="Helical" evidence="2">
    <location>
        <begin position="33"/>
        <end position="53"/>
    </location>
</feature>
<feature type="transmembrane region" description="Helical" evidence="2">
    <location>
        <begin position="77"/>
        <end position="98"/>
    </location>
</feature>
<feature type="transmembrane region" description="Helical" evidence="2">
    <location>
        <begin position="113"/>
        <end position="133"/>
    </location>
</feature>
<feature type="transmembrane region" description="Helical" evidence="2">
    <location>
        <begin position="178"/>
        <end position="198"/>
    </location>
</feature>
<feature type="transmembrane region" description="Helical" evidence="2">
    <location>
        <begin position="226"/>
        <end position="246"/>
    </location>
</feature>
<feature type="transmembrane region" description="Helical" evidence="2">
    <location>
        <begin position="288"/>
        <end position="308"/>
    </location>
</feature>
<feature type="transmembrane region" description="Helical" evidence="2">
    <location>
        <begin position="320"/>
        <end position="340"/>
    </location>
</feature>
<feature type="transmembrane region" description="Helical" evidence="2">
    <location>
        <begin position="347"/>
        <end position="367"/>
    </location>
</feature>
<feature type="binding site" description="axial binding residue" evidence="2">
    <location>
        <position position="83"/>
    </location>
    <ligand>
        <name>heme b</name>
        <dbReference type="ChEBI" id="CHEBI:60344"/>
        <label>b562</label>
    </ligand>
    <ligandPart>
        <name>Fe</name>
        <dbReference type="ChEBI" id="CHEBI:18248"/>
    </ligandPart>
</feature>
<feature type="binding site" description="axial binding residue" evidence="2">
    <location>
        <position position="97"/>
    </location>
    <ligand>
        <name>heme b</name>
        <dbReference type="ChEBI" id="CHEBI:60344"/>
        <label>b566</label>
    </ligand>
    <ligandPart>
        <name>Fe</name>
        <dbReference type="ChEBI" id="CHEBI:18248"/>
    </ligandPart>
</feature>
<feature type="binding site" description="axial binding residue" evidence="2">
    <location>
        <position position="182"/>
    </location>
    <ligand>
        <name>heme b</name>
        <dbReference type="ChEBI" id="CHEBI:60344"/>
        <label>b562</label>
    </ligand>
    <ligandPart>
        <name>Fe</name>
        <dbReference type="ChEBI" id="CHEBI:18248"/>
    </ligandPart>
</feature>
<feature type="binding site" description="axial binding residue" evidence="2">
    <location>
        <position position="196"/>
    </location>
    <ligand>
        <name>heme b</name>
        <dbReference type="ChEBI" id="CHEBI:60344"/>
        <label>b566</label>
    </ligand>
    <ligandPart>
        <name>Fe</name>
        <dbReference type="ChEBI" id="CHEBI:18248"/>
    </ligandPart>
</feature>
<feature type="binding site" evidence="2">
    <location>
        <position position="201"/>
    </location>
    <ligand>
        <name>a ubiquinone</name>
        <dbReference type="ChEBI" id="CHEBI:16389"/>
    </ligand>
</feature>
<name>CYB_APOMY</name>
<evidence type="ECO:0000250" key="1"/>
<evidence type="ECO:0000250" key="2">
    <source>
        <dbReference type="UniProtKB" id="P00157"/>
    </source>
</evidence>
<evidence type="ECO:0000255" key="3">
    <source>
        <dbReference type="PROSITE-ProRule" id="PRU00967"/>
    </source>
</evidence>
<evidence type="ECO:0000255" key="4">
    <source>
        <dbReference type="PROSITE-ProRule" id="PRU00968"/>
    </source>
</evidence>
<keyword id="KW-0249">Electron transport</keyword>
<keyword id="KW-0349">Heme</keyword>
<keyword id="KW-0408">Iron</keyword>
<keyword id="KW-0472">Membrane</keyword>
<keyword id="KW-0479">Metal-binding</keyword>
<keyword id="KW-0496">Mitochondrion</keyword>
<keyword id="KW-0999">Mitochondrion inner membrane</keyword>
<keyword id="KW-0679">Respiratory chain</keyword>
<keyword id="KW-0812">Transmembrane</keyword>
<keyword id="KW-1133">Transmembrane helix</keyword>
<keyword id="KW-0813">Transport</keyword>
<keyword id="KW-0830">Ubiquinone</keyword>
<geneLocation type="mitochondrion"/>
<reference key="1">
    <citation type="journal article" date="2000" name="Mol. Phylogenet. Evol.">
        <title>Molecular phylogeny of European muroid rodents based on complete cytochrome b sequences.</title>
        <authorList>
            <person name="Martin Y."/>
            <person name="Gerlach G."/>
            <person name="Schlotterer C."/>
            <person name="Meyer A."/>
        </authorList>
    </citation>
    <scope>NUCLEOTIDE SEQUENCE [GENOMIC DNA]</scope>
</reference>
<accession>Q9TEY5</accession>
<sequence>MTNMRKTHPLMKIINHSFIDLPAPSNISSWWNFGSLLGMCLMLQIITGLFLAMHYTSDTMTAFSSVTHICRDVNYGWLIRYLHANGASMFFICLFLHVGRGMYYGSYMFMETWNIGIILLFAVMATAFMGYVLPWGQMSFWGATVITNLLSAIPYIGTTLVEWIWGGFSVDKATLTRFFAFHFILPFIITALVIVHLLFLHETGSNNPTGLNSDADKIPFHPYYTIKDILGILLMIMFLMTLVLFFPDLLGDPDNYTPANPLNTPPHIKPEWYFLFAYAILRSIPNKLGGVLALILSILILALLPLLHTSQQRSMIFRPITQTLYWILVANLFILTWIGGQPVEHPFIIIGQLASISYFSIILIMMPISGIIEDKMLKWNS</sequence>
<dbReference type="EMBL" id="AF159394">
    <property type="protein sequence ID" value="AAD49239.1"/>
    <property type="molecule type" value="Genomic_DNA"/>
</dbReference>
<dbReference type="SMR" id="Q9TEY5"/>
<dbReference type="GO" id="GO:0005743">
    <property type="term" value="C:mitochondrial inner membrane"/>
    <property type="evidence" value="ECO:0007669"/>
    <property type="project" value="UniProtKB-SubCell"/>
</dbReference>
<dbReference type="GO" id="GO:0045275">
    <property type="term" value="C:respiratory chain complex III"/>
    <property type="evidence" value="ECO:0007669"/>
    <property type="project" value="InterPro"/>
</dbReference>
<dbReference type="GO" id="GO:0046872">
    <property type="term" value="F:metal ion binding"/>
    <property type="evidence" value="ECO:0007669"/>
    <property type="project" value="UniProtKB-KW"/>
</dbReference>
<dbReference type="GO" id="GO:0008121">
    <property type="term" value="F:ubiquinol-cytochrome-c reductase activity"/>
    <property type="evidence" value="ECO:0007669"/>
    <property type="project" value="InterPro"/>
</dbReference>
<dbReference type="GO" id="GO:0006122">
    <property type="term" value="P:mitochondrial electron transport, ubiquinol to cytochrome c"/>
    <property type="evidence" value="ECO:0007669"/>
    <property type="project" value="TreeGrafter"/>
</dbReference>
<dbReference type="CDD" id="cd00290">
    <property type="entry name" value="cytochrome_b_C"/>
    <property type="match status" value="1"/>
</dbReference>
<dbReference type="CDD" id="cd00284">
    <property type="entry name" value="Cytochrome_b_N"/>
    <property type="match status" value="1"/>
</dbReference>
<dbReference type="FunFam" id="1.20.810.10:FF:000002">
    <property type="entry name" value="Cytochrome b"/>
    <property type="match status" value="1"/>
</dbReference>
<dbReference type="Gene3D" id="1.20.810.10">
    <property type="entry name" value="Cytochrome Bc1 Complex, Chain C"/>
    <property type="match status" value="1"/>
</dbReference>
<dbReference type="InterPro" id="IPR005798">
    <property type="entry name" value="Cyt_b/b6_C"/>
</dbReference>
<dbReference type="InterPro" id="IPR036150">
    <property type="entry name" value="Cyt_b/b6_C_sf"/>
</dbReference>
<dbReference type="InterPro" id="IPR005797">
    <property type="entry name" value="Cyt_b/b6_N"/>
</dbReference>
<dbReference type="InterPro" id="IPR027387">
    <property type="entry name" value="Cytb/b6-like_sf"/>
</dbReference>
<dbReference type="InterPro" id="IPR030689">
    <property type="entry name" value="Cytochrome_b"/>
</dbReference>
<dbReference type="InterPro" id="IPR048260">
    <property type="entry name" value="Cytochrome_b_C_euk/bac"/>
</dbReference>
<dbReference type="InterPro" id="IPR048259">
    <property type="entry name" value="Cytochrome_b_N_euk/bac"/>
</dbReference>
<dbReference type="InterPro" id="IPR016174">
    <property type="entry name" value="Di-haem_cyt_TM"/>
</dbReference>
<dbReference type="PANTHER" id="PTHR19271">
    <property type="entry name" value="CYTOCHROME B"/>
    <property type="match status" value="1"/>
</dbReference>
<dbReference type="PANTHER" id="PTHR19271:SF16">
    <property type="entry name" value="CYTOCHROME B"/>
    <property type="match status" value="1"/>
</dbReference>
<dbReference type="Pfam" id="PF00032">
    <property type="entry name" value="Cytochrom_B_C"/>
    <property type="match status" value="1"/>
</dbReference>
<dbReference type="Pfam" id="PF00033">
    <property type="entry name" value="Cytochrome_B"/>
    <property type="match status" value="1"/>
</dbReference>
<dbReference type="PIRSF" id="PIRSF038885">
    <property type="entry name" value="COB"/>
    <property type="match status" value="1"/>
</dbReference>
<dbReference type="SUPFAM" id="SSF81648">
    <property type="entry name" value="a domain/subunit of cytochrome bc1 complex (Ubiquinol-cytochrome c reductase)"/>
    <property type="match status" value="1"/>
</dbReference>
<dbReference type="SUPFAM" id="SSF81342">
    <property type="entry name" value="Transmembrane di-heme cytochromes"/>
    <property type="match status" value="1"/>
</dbReference>
<dbReference type="PROSITE" id="PS51003">
    <property type="entry name" value="CYTB_CTER"/>
    <property type="match status" value="1"/>
</dbReference>
<dbReference type="PROSITE" id="PS51002">
    <property type="entry name" value="CYTB_NTER"/>
    <property type="match status" value="1"/>
</dbReference>
<protein>
    <recommendedName>
        <fullName>Cytochrome b</fullName>
    </recommendedName>
    <alternativeName>
        <fullName>Complex III subunit 3</fullName>
    </alternativeName>
    <alternativeName>
        <fullName>Complex III subunit III</fullName>
    </alternativeName>
    <alternativeName>
        <fullName>Cytochrome b-c1 complex subunit 3</fullName>
    </alternativeName>
    <alternativeName>
        <fullName>Ubiquinol-cytochrome-c reductase complex cytochrome b subunit</fullName>
    </alternativeName>
</protein>
<proteinExistence type="inferred from homology"/>
<gene>
    <name type="primary">MT-CYB</name>
    <name type="synonym">COB</name>
    <name type="synonym">CYTB</name>
    <name type="synonym">MTCYB</name>
</gene>
<organism>
    <name type="scientific">Apodemus mystacinus</name>
    <name type="common">Broad-toothed field mouse</name>
    <dbReference type="NCBI Taxonomy" id="100382"/>
    <lineage>
        <taxon>Eukaryota</taxon>
        <taxon>Metazoa</taxon>
        <taxon>Chordata</taxon>
        <taxon>Craniata</taxon>
        <taxon>Vertebrata</taxon>
        <taxon>Euteleostomi</taxon>
        <taxon>Mammalia</taxon>
        <taxon>Eutheria</taxon>
        <taxon>Euarchontoglires</taxon>
        <taxon>Glires</taxon>
        <taxon>Rodentia</taxon>
        <taxon>Myomorpha</taxon>
        <taxon>Muroidea</taxon>
        <taxon>Muridae</taxon>
        <taxon>Murinae</taxon>
        <taxon>Apodemus</taxon>
        <taxon>Sylvaemus group</taxon>
    </lineage>
</organism>
<comment type="function">
    <text evidence="2">Component of the ubiquinol-cytochrome c reductase complex (complex III or cytochrome b-c1 complex) that is part of the mitochondrial respiratory chain. The b-c1 complex mediates electron transfer from ubiquinol to cytochrome c. Contributes to the generation of a proton gradient across the mitochondrial membrane that is then used for ATP synthesis.</text>
</comment>
<comment type="cofactor">
    <cofactor evidence="2">
        <name>heme b</name>
        <dbReference type="ChEBI" id="CHEBI:60344"/>
    </cofactor>
    <text evidence="2">Binds 2 heme b groups non-covalently.</text>
</comment>
<comment type="subunit">
    <text evidence="2">The cytochrome bc1 complex contains 11 subunits: 3 respiratory subunits (MT-CYB, CYC1 and UQCRFS1), 2 core proteins (UQCRC1 and UQCRC2) and 6 low-molecular weight proteins (UQCRH/QCR6, UQCRB/QCR7, UQCRQ/QCR8, UQCR10/QCR9, UQCR11/QCR10 and a cleavage product of UQCRFS1). This cytochrome bc1 complex then forms a dimer.</text>
</comment>
<comment type="subcellular location">
    <subcellularLocation>
        <location evidence="2">Mitochondrion inner membrane</location>
        <topology evidence="2">Multi-pass membrane protein</topology>
    </subcellularLocation>
</comment>
<comment type="miscellaneous">
    <text evidence="1">Heme 1 (or BL or b562) is low-potential and absorbs at about 562 nm, and heme 2 (or BH or b566) is high-potential and absorbs at about 566 nm.</text>
</comment>
<comment type="similarity">
    <text evidence="3 4">Belongs to the cytochrome b family.</text>
</comment>
<comment type="caution">
    <text evidence="2">The full-length protein contains only eight transmembrane helices, not nine as predicted by bioinformatics tools.</text>
</comment>